<gene>
    <name evidence="1" type="primary">dnaA</name>
    <name type="ordered locus">CCNA_00008</name>
</gene>
<comment type="function">
    <text evidence="1">Plays an essential role in the initiation and regulation of chromosomal replication. ATP-DnaA binds to the origin of replication (oriC) to initiate formation of the DNA replication initiation complex once per cell cycle. Binds the DnaA box (a 9 base pair repeat at the origin) and separates the double-stranded (ds)DNA. Forms a right-handed helical filament on oriC DNA; dsDNA binds to the exterior of the filament while single-stranded (ss)DNA is stabiized in the filament's interior. The ATP-DnaA-oriC complex binds and stabilizes one strand of the AT-rich DNA unwinding element (DUE), permitting loading of DNA polymerase. After initiation quickly degrades to an ADP-DnaA complex that is not apt for DNA replication. Binds acidic phospholipids.</text>
</comment>
<comment type="subunit">
    <text evidence="1">Oligomerizes as a right-handed, spiral filament on DNA at oriC.</text>
</comment>
<comment type="subcellular location">
    <subcellularLocation>
        <location evidence="1">Cytoplasm</location>
    </subcellularLocation>
</comment>
<comment type="developmental stage">
    <text evidence="2">Expressed in stalked and swarmer cells (at protein level).</text>
</comment>
<comment type="induction">
    <text evidence="2">Expressed throughout the cell cycle in synchonized cells, with a 2-fold increase 10-20 minutes after time 0, just prior to replication initiation in nascent stalked cells (at protein level).</text>
</comment>
<comment type="domain">
    <text evidence="1">Domain I is involved in oligomerization and binding regulators, domain II is flexibile and of varying length in different bacteria, domain III forms the AAA+ region, while domain IV binds dsDNA.</text>
</comment>
<comment type="disruption phenotype">
    <text evidence="2">Probably essential, disruptions have not been isolated.</text>
</comment>
<comment type="similarity">
    <text evidence="1 3">Belongs to the DnaA family.</text>
</comment>
<accession>B8GWW5</accession>
<accession>P35887</accession>
<proteinExistence type="evidence at protein level"/>
<protein>
    <recommendedName>
        <fullName evidence="1">Chromosomal replication initiator protein DnaA</fullName>
    </recommendedName>
</protein>
<sequence length="490" mass="53884">MTMKGGVASQDFSAAIATACEPAANVWSKVCVALKRELGDAAFGSWIAPAMLREAATGDVVLVTSTGIARDWIRRSAWRRIGELWAAHDATGRRIDLKSRLEFEAAAGAYVEATPKAVAAEPIEIVLPVSTDAPTVVAPSAKSPRTQGLQERFTFETFVPGPANEFAHAVARRIANWADGHFNPVLFHGPYGFGKTHLLNALAWEAMRNAPEKRVVYLTAERFLSTFVRAVMDRQTAAFKEELRAADLLIIDDVHFIAGKQSTQEELFHTLTALVGEGGRVVFSADRPPSAMTEMDAHLRSHLSAGLVCGLEPADRNLRLGILERKIQTLGAAHGFEPSIRPEVMQFLADRFTDSVRELEGALNTLSARAGEGLSRMTLDEVQAILRPHLRSGEKRITIDDIQKATAEHYGMKQADLLSERRNRAVARPRQAAMWLAKQLTTRSLPDIGRRFGGRDHTTVLHAVRRIEALRAEDSALSHDLETLTRKLRG</sequence>
<feature type="chain" id="PRO_0000378284" description="Chromosomal replication initiator protein DnaA">
    <location>
        <begin position="1"/>
        <end position="490"/>
    </location>
</feature>
<feature type="region of interest" description="Domain I, interacts with DnaA modulators" evidence="1">
    <location>
        <begin position="1"/>
        <end position="91"/>
    </location>
</feature>
<feature type="region of interest" description="Domain II" evidence="1">
    <location>
        <begin position="91"/>
        <end position="147"/>
    </location>
</feature>
<feature type="region of interest" description="Domain III, AAA+ region" evidence="1">
    <location>
        <begin position="148"/>
        <end position="370"/>
    </location>
</feature>
<feature type="region of interest" description="Domain IV, binds dsDNA" evidence="1">
    <location>
        <begin position="371"/>
        <end position="490"/>
    </location>
</feature>
<feature type="binding site" evidence="1">
    <location>
        <position position="192"/>
    </location>
    <ligand>
        <name>ATP</name>
        <dbReference type="ChEBI" id="CHEBI:30616"/>
    </ligand>
</feature>
<feature type="binding site" evidence="1">
    <location>
        <position position="194"/>
    </location>
    <ligand>
        <name>ATP</name>
        <dbReference type="ChEBI" id="CHEBI:30616"/>
    </ligand>
</feature>
<feature type="binding site" evidence="1">
    <location>
        <position position="195"/>
    </location>
    <ligand>
        <name>ATP</name>
        <dbReference type="ChEBI" id="CHEBI:30616"/>
    </ligand>
</feature>
<feature type="binding site" evidence="1">
    <location>
        <position position="196"/>
    </location>
    <ligand>
        <name>ATP</name>
        <dbReference type="ChEBI" id="CHEBI:30616"/>
    </ligand>
</feature>
<feature type="sequence conflict" description="In Ref. 1; AAA18927." evidence="3" ref="1">
    <original>H</original>
    <variation>L</variation>
    <location>
        <position position="334"/>
    </location>
</feature>
<organism>
    <name type="scientific">Caulobacter vibrioides (strain NA1000 / CB15N)</name>
    <name type="common">Caulobacter crescentus</name>
    <dbReference type="NCBI Taxonomy" id="565050"/>
    <lineage>
        <taxon>Bacteria</taxon>
        <taxon>Pseudomonadati</taxon>
        <taxon>Pseudomonadota</taxon>
        <taxon>Alphaproteobacteria</taxon>
        <taxon>Caulobacterales</taxon>
        <taxon>Caulobacteraceae</taxon>
        <taxon>Caulobacter</taxon>
    </lineage>
</organism>
<reference key="1">
    <citation type="journal article" date="1994" name="J. Bacteriol.">
        <title>Expression of Caulobacter dnaA as a function of the cell cycle.</title>
        <authorList>
            <person name="Zweiger G."/>
            <person name="Shapiro L."/>
        </authorList>
    </citation>
    <scope>NUCLEOTIDE SEQUENCE [GENOMIC DNA]</scope>
    <scope>DEVELOPMENTAL STAGE</scope>
    <scope>INDUCTION</scope>
    <scope>DISRUPTION PHENOTYPE</scope>
    <source>
        <strain>NA1000 / CB15N</strain>
    </source>
</reference>
<reference key="2">
    <citation type="journal article" date="2010" name="J. Bacteriol.">
        <title>The genetic basis of laboratory adaptation in Caulobacter crescentus.</title>
        <authorList>
            <person name="Marks M.E."/>
            <person name="Castro-Rojas C.M."/>
            <person name="Teiling C."/>
            <person name="Du L."/>
            <person name="Kapatral V."/>
            <person name="Walunas T.L."/>
            <person name="Crosson S."/>
        </authorList>
    </citation>
    <scope>NUCLEOTIDE SEQUENCE [LARGE SCALE GENOMIC DNA]</scope>
    <source>
        <strain>NA1000 / CB15N</strain>
    </source>
</reference>
<evidence type="ECO:0000255" key="1">
    <source>
        <dbReference type="HAMAP-Rule" id="MF_00377"/>
    </source>
</evidence>
<evidence type="ECO:0000269" key="2">
    <source>
    </source>
</evidence>
<evidence type="ECO:0000305" key="3"/>
<name>DNAA_CAUVN</name>
<keyword id="KW-0067">ATP-binding</keyword>
<keyword id="KW-0963">Cytoplasm</keyword>
<keyword id="KW-0235">DNA replication</keyword>
<keyword id="KW-0238">DNA-binding</keyword>
<keyword id="KW-0446">Lipid-binding</keyword>
<keyword id="KW-0547">Nucleotide-binding</keyword>
<keyword id="KW-1185">Reference proteome</keyword>
<dbReference type="EMBL" id="U01667">
    <property type="protein sequence ID" value="AAA18927.1"/>
    <property type="molecule type" value="Genomic_DNA"/>
</dbReference>
<dbReference type="EMBL" id="CP001340">
    <property type="protein sequence ID" value="ACL93475.1"/>
    <property type="molecule type" value="Genomic_DNA"/>
</dbReference>
<dbReference type="PIR" id="B36947">
    <property type="entry name" value="B36947"/>
</dbReference>
<dbReference type="RefSeq" id="WP_010917898.1">
    <property type="nucleotide sequence ID" value="NC_011916.1"/>
</dbReference>
<dbReference type="RefSeq" id="YP_002515383.1">
    <property type="nucleotide sequence ID" value="NC_011916.1"/>
</dbReference>
<dbReference type="SMR" id="B8GWW5"/>
<dbReference type="GeneID" id="7333149"/>
<dbReference type="KEGG" id="ccs:CCNA_00008"/>
<dbReference type="PATRIC" id="fig|565050.3.peg.8"/>
<dbReference type="HOGENOM" id="CLU_026910_3_0_5"/>
<dbReference type="OrthoDB" id="9807019at2"/>
<dbReference type="PhylomeDB" id="B8GWW5"/>
<dbReference type="Proteomes" id="UP000001364">
    <property type="component" value="Chromosome"/>
</dbReference>
<dbReference type="GO" id="GO:0005737">
    <property type="term" value="C:cytoplasm"/>
    <property type="evidence" value="ECO:0007669"/>
    <property type="project" value="UniProtKB-SubCell"/>
</dbReference>
<dbReference type="GO" id="GO:0005886">
    <property type="term" value="C:plasma membrane"/>
    <property type="evidence" value="ECO:0007669"/>
    <property type="project" value="TreeGrafter"/>
</dbReference>
<dbReference type="GO" id="GO:0005524">
    <property type="term" value="F:ATP binding"/>
    <property type="evidence" value="ECO:0007669"/>
    <property type="project" value="UniProtKB-UniRule"/>
</dbReference>
<dbReference type="GO" id="GO:0016887">
    <property type="term" value="F:ATP hydrolysis activity"/>
    <property type="evidence" value="ECO:0007669"/>
    <property type="project" value="InterPro"/>
</dbReference>
<dbReference type="GO" id="GO:0003688">
    <property type="term" value="F:DNA replication origin binding"/>
    <property type="evidence" value="ECO:0007669"/>
    <property type="project" value="UniProtKB-UniRule"/>
</dbReference>
<dbReference type="GO" id="GO:0008289">
    <property type="term" value="F:lipid binding"/>
    <property type="evidence" value="ECO:0007669"/>
    <property type="project" value="UniProtKB-KW"/>
</dbReference>
<dbReference type="GO" id="GO:0006270">
    <property type="term" value="P:DNA replication initiation"/>
    <property type="evidence" value="ECO:0007669"/>
    <property type="project" value="UniProtKB-UniRule"/>
</dbReference>
<dbReference type="GO" id="GO:0006275">
    <property type="term" value="P:regulation of DNA replication"/>
    <property type="evidence" value="ECO:0007669"/>
    <property type="project" value="UniProtKB-UniRule"/>
</dbReference>
<dbReference type="CDD" id="cd00009">
    <property type="entry name" value="AAA"/>
    <property type="match status" value="1"/>
</dbReference>
<dbReference type="CDD" id="cd06571">
    <property type="entry name" value="Bac_DnaA_C"/>
    <property type="match status" value="1"/>
</dbReference>
<dbReference type="Gene3D" id="1.10.1750.10">
    <property type="match status" value="1"/>
</dbReference>
<dbReference type="Gene3D" id="1.10.8.60">
    <property type="match status" value="1"/>
</dbReference>
<dbReference type="Gene3D" id="3.30.300.180">
    <property type="match status" value="1"/>
</dbReference>
<dbReference type="Gene3D" id="3.40.50.300">
    <property type="entry name" value="P-loop containing nucleotide triphosphate hydrolases"/>
    <property type="match status" value="1"/>
</dbReference>
<dbReference type="HAMAP" id="MF_00377">
    <property type="entry name" value="DnaA_bact"/>
    <property type="match status" value="1"/>
</dbReference>
<dbReference type="InterPro" id="IPR003593">
    <property type="entry name" value="AAA+_ATPase"/>
</dbReference>
<dbReference type="InterPro" id="IPR001957">
    <property type="entry name" value="Chromosome_initiator_DnaA"/>
</dbReference>
<dbReference type="InterPro" id="IPR020591">
    <property type="entry name" value="Chromosome_initiator_DnaA-like"/>
</dbReference>
<dbReference type="InterPro" id="IPR018312">
    <property type="entry name" value="Chromosome_initiator_DnaA_CS"/>
</dbReference>
<dbReference type="InterPro" id="IPR013159">
    <property type="entry name" value="DnaA_C"/>
</dbReference>
<dbReference type="InterPro" id="IPR013317">
    <property type="entry name" value="DnaA_dom"/>
</dbReference>
<dbReference type="InterPro" id="IPR024633">
    <property type="entry name" value="DnaA_N_dom"/>
</dbReference>
<dbReference type="InterPro" id="IPR038454">
    <property type="entry name" value="DnaA_N_sf"/>
</dbReference>
<dbReference type="InterPro" id="IPR027417">
    <property type="entry name" value="P-loop_NTPase"/>
</dbReference>
<dbReference type="InterPro" id="IPR010921">
    <property type="entry name" value="Trp_repressor/repl_initiator"/>
</dbReference>
<dbReference type="NCBIfam" id="TIGR00362">
    <property type="entry name" value="DnaA"/>
    <property type="match status" value="1"/>
</dbReference>
<dbReference type="PANTHER" id="PTHR30050">
    <property type="entry name" value="CHROMOSOMAL REPLICATION INITIATOR PROTEIN DNAA"/>
    <property type="match status" value="1"/>
</dbReference>
<dbReference type="PANTHER" id="PTHR30050:SF2">
    <property type="entry name" value="CHROMOSOMAL REPLICATION INITIATOR PROTEIN DNAA"/>
    <property type="match status" value="1"/>
</dbReference>
<dbReference type="Pfam" id="PF00308">
    <property type="entry name" value="Bac_DnaA"/>
    <property type="match status" value="1"/>
</dbReference>
<dbReference type="Pfam" id="PF08299">
    <property type="entry name" value="Bac_DnaA_C"/>
    <property type="match status" value="1"/>
</dbReference>
<dbReference type="Pfam" id="PF11638">
    <property type="entry name" value="DnaA_N"/>
    <property type="match status" value="1"/>
</dbReference>
<dbReference type="PRINTS" id="PR00051">
    <property type="entry name" value="DNAA"/>
</dbReference>
<dbReference type="SMART" id="SM00382">
    <property type="entry name" value="AAA"/>
    <property type="match status" value="1"/>
</dbReference>
<dbReference type="SMART" id="SM00760">
    <property type="entry name" value="Bac_DnaA_C"/>
    <property type="match status" value="1"/>
</dbReference>
<dbReference type="SUPFAM" id="SSF52540">
    <property type="entry name" value="P-loop containing nucleoside triphosphate hydrolases"/>
    <property type="match status" value="1"/>
</dbReference>
<dbReference type="SUPFAM" id="SSF48295">
    <property type="entry name" value="TrpR-like"/>
    <property type="match status" value="1"/>
</dbReference>
<dbReference type="PROSITE" id="PS01008">
    <property type="entry name" value="DNAA"/>
    <property type="match status" value="1"/>
</dbReference>